<feature type="chain" id="PRO_0000388949" description="UPF0757 protein YmgG">
    <location>
        <begin position="1"/>
        <end position="114"/>
    </location>
</feature>
<sequence>MKKKILAFGLISALFCSTPAMADMNRTTKGALLGAGVGLLTGNGVNGVLKGAAVGAGVGAVTEKGRDGKNARKGAKVGAAVGAVTGVLTGNGLEGAIKGAVIGGTGGAILGKMK</sequence>
<dbReference type="EMBL" id="CP000819">
    <property type="protein sequence ID" value="ACT38827.1"/>
    <property type="status" value="ALT_INIT"/>
    <property type="molecule type" value="Genomic_DNA"/>
</dbReference>
<dbReference type="RefSeq" id="WP_000726974.1">
    <property type="nucleotide sequence ID" value="NC_012967.1"/>
</dbReference>
<dbReference type="KEGG" id="ebr:ECB_01147"/>
<dbReference type="HOGENOM" id="CLU_164687_0_0_6"/>
<dbReference type="HAMAP" id="MF_01455">
    <property type="entry name" value="UPF0757"/>
    <property type="match status" value="1"/>
</dbReference>
<dbReference type="InterPro" id="IPR025693">
    <property type="entry name" value="Gly-zipper_OmpA-like_dom"/>
</dbReference>
<dbReference type="InterPro" id="IPR027367">
    <property type="entry name" value="Gly-zipper_YMGG"/>
</dbReference>
<dbReference type="InterPro" id="IPR022833">
    <property type="entry name" value="UPF0757_YmgG"/>
</dbReference>
<dbReference type="Pfam" id="PF13436">
    <property type="entry name" value="Gly-zipper_OmpA"/>
    <property type="match status" value="1"/>
</dbReference>
<dbReference type="Pfam" id="PF13441">
    <property type="entry name" value="Gly-zipper_YMGG"/>
    <property type="match status" value="1"/>
</dbReference>
<comment type="similarity">
    <text evidence="1">Belongs to the UPF0757 family.</text>
</comment>
<comment type="sequence caution" evidence="2">
    <conflict type="erroneous initiation">
        <sequence resource="EMBL-CDS" id="ACT38827"/>
    </conflict>
</comment>
<organism>
    <name type="scientific">Escherichia coli (strain B / REL606)</name>
    <dbReference type="NCBI Taxonomy" id="413997"/>
    <lineage>
        <taxon>Bacteria</taxon>
        <taxon>Pseudomonadati</taxon>
        <taxon>Pseudomonadota</taxon>
        <taxon>Gammaproteobacteria</taxon>
        <taxon>Enterobacterales</taxon>
        <taxon>Enterobacteriaceae</taxon>
        <taxon>Escherichia</taxon>
    </lineage>
</organism>
<proteinExistence type="inferred from homology"/>
<name>YMGG_ECOBR</name>
<reference key="1">
    <citation type="journal article" date="2009" name="J. Mol. Biol.">
        <title>Genome sequences of Escherichia coli B strains REL606 and BL21(DE3).</title>
        <authorList>
            <person name="Jeong H."/>
            <person name="Barbe V."/>
            <person name="Lee C.H."/>
            <person name="Vallenet D."/>
            <person name="Yu D.S."/>
            <person name="Choi S.H."/>
            <person name="Couloux A."/>
            <person name="Lee S.W."/>
            <person name="Yoon S.H."/>
            <person name="Cattolico L."/>
            <person name="Hur C.G."/>
            <person name="Park H.S."/>
            <person name="Segurens B."/>
            <person name="Kim S.C."/>
            <person name="Oh T.K."/>
            <person name="Lenski R.E."/>
            <person name="Studier F.W."/>
            <person name="Daegelen P."/>
            <person name="Kim J.F."/>
        </authorList>
    </citation>
    <scope>NUCLEOTIDE SEQUENCE [LARGE SCALE GENOMIC DNA]</scope>
    <source>
        <strain>B / REL606</strain>
    </source>
</reference>
<evidence type="ECO:0000255" key="1">
    <source>
        <dbReference type="HAMAP-Rule" id="MF_01455"/>
    </source>
</evidence>
<evidence type="ECO:0000305" key="2"/>
<gene>
    <name evidence="1" type="primary">ymgG</name>
    <name type="ordered locus">ECB_01147</name>
</gene>
<protein>
    <recommendedName>
        <fullName evidence="1">UPF0757 protein YmgG</fullName>
    </recommendedName>
</protein>
<accession>C6UG39</accession>